<accession>Q9FHH5</accession>
<reference key="1">
    <citation type="journal article" date="1999" name="DNA Res.">
        <title>Structural analysis of Arabidopsis thaliana chromosome 5. IX. Sequence features of the regions of 1,011,550 bp covered by seventeen P1 and TAC clones.</title>
        <authorList>
            <person name="Kaneko T."/>
            <person name="Katoh T."/>
            <person name="Sato S."/>
            <person name="Nakamura Y."/>
            <person name="Asamizu E."/>
            <person name="Kotani H."/>
            <person name="Miyajima N."/>
            <person name="Tabata S."/>
        </authorList>
    </citation>
    <scope>NUCLEOTIDE SEQUENCE [LARGE SCALE GENOMIC DNA]</scope>
    <source>
        <strain>cv. Columbia</strain>
    </source>
</reference>
<reference key="2">
    <citation type="journal article" date="2017" name="Plant J.">
        <title>Araport11: a complete reannotation of the Arabidopsis thaliana reference genome.</title>
        <authorList>
            <person name="Cheng C.Y."/>
            <person name="Krishnakumar V."/>
            <person name="Chan A.P."/>
            <person name="Thibaud-Nissen F."/>
            <person name="Schobel S."/>
            <person name="Town C.D."/>
        </authorList>
    </citation>
    <scope>GENOME REANNOTATION</scope>
    <source>
        <strain>cv. Columbia</strain>
    </source>
</reference>
<reference key="3">
    <citation type="submission" date="2004-05" db="EMBL/GenBank/DDBJ databases">
        <title>Arabidopsis ORF clones.</title>
        <authorList>
            <person name="Cheuk R.F."/>
            <person name="Chen H."/>
            <person name="Kim C.J."/>
            <person name="Shinn P."/>
            <person name="Ecker J.R."/>
        </authorList>
    </citation>
    <scope>NUCLEOTIDE SEQUENCE [LARGE SCALE MRNA]</scope>
    <source>
        <strain>cv. Columbia</strain>
    </source>
</reference>
<reference key="4">
    <citation type="journal article" date="2004" name="Plant Cell">
        <title>Overexpression of GLUTAMINE DUMPER1 leads to hypersecretion of glutamine from hydathodes of Arabidopsis leaves.</title>
        <authorList>
            <person name="Pilot G."/>
            <person name="Stransky H."/>
            <person name="Bushey D.F."/>
            <person name="Pratelli R."/>
            <person name="Ludewig U."/>
            <person name="Wingate V.P."/>
            <person name="Frommer W.B."/>
        </authorList>
    </citation>
    <scope>GENE FAMILY</scope>
</reference>
<reference key="5">
    <citation type="journal article" date="2006" name="FEBS Lett.">
        <title>The plant-specific VIMAG domain of Glutamine Dumper1 is necessary for the function of the protein in Arabidopsis.</title>
        <authorList>
            <person name="Pratelli R."/>
            <person name="Pilot G."/>
        </authorList>
    </citation>
    <scope>GENE FAMILY</scope>
</reference>
<reference key="6">
    <citation type="journal article" date="2007" name="FEBS Lett.">
        <authorList>
            <person name="Pratelli R."/>
            <person name="Pilot G."/>
        </authorList>
    </citation>
    <scope>ERRATUM OF PUBMED:17157837</scope>
</reference>
<reference key="7">
    <citation type="book" date="2008" name="Proceedings of the 19th international conference on Arabidopsis research">
        <title>The over-expression of GDU-like genes leads to modification in amino acid content and transport.</title>
        <authorList>
            <person name="Pratelli R."/>
            <person name="Frommer W.B."/>
            <person name="Pilot G."/>
        </authorList>
    </citation>
    <scope>FUNCTION</scope>
    <scope>TISSUE SPECIFICITY</scope>
    <scope>SUBCELLULAR LOCATION</scope>
</reference>
<reference key="8">
    <citation type="journal article" date="2010" name="Plant J.">
        <title>Up-regulation of LSB1/GDU3 affects geminivirus infection by activating the salicylic acid pathway.</title>
        <authorList>
            <person name="Chen H."/>
            <person name="Zhang Z."/>
            <person name="Teng K."/>
            <person name="Lai J."/>
            <person name="Zhang Y."/>
            <person name="Huang Y."/>
            <person name="Li Y."/>
            <person name="Liang L."/>
            <person name="Wang Y."/>
            <person name="Chu C."/>
            <person name="Guo H."/>
            <person name="Xie Q."/>
        </authorList>
    </citation>
    <scope>FUNCTION</scope>
    <scope>INDUCTION BY GEMINIVIRUS</scope>
</reference>
<reference key="9">
    <citation type="journal article" date="2010" name="Plant Physiol.">
        <title>Stimulation of nonselective amino acid export by glutamine dumper proteins.</title>
        <authorList>
            <person name="Pratelli R."/>
            <person name="Voll L.M."/>
            <person name="Horst R.J."/>
            <person name="Frommer W.B."/>
            <person name="Pilot G."/>
        </authorList>
    </citation>
    <scope>FUNCTION</scope>
    <scope>TISSUE SPECIFICITY</scope>
</reference>
<feature type="chain" id="PRO_0000419941" description="Protein GLUTAMINE DUMPER 3">
    <location>
        <begin position="1"/>
        <end position="148"/>
    </location>
</feature>
<feature type="topological domain" description="Extracellular" evidence="2">
    <location>
        <begin position="1"/>
        <end position="34"/>
    </location>
</feature>
<feature type="transmembrane region" description="Helical" evidence="2">
    <location>
        <begin position="35"/>
        <end position="55"/>
    </location>
</feature>
<feature type="topological domain" description="Cytoplasmic" evidence="2">
    <location>
        <begin position="56"/>
        <end position="148"/>
    </location>
</feature>
<feature type="region of interest" description="Disordered" evidence="3">
    <location>
        <begin position="1"/>
        <end position="24"/>
    </location>
</feature>
<feature type="region of interest" description="Disordered" evidence="3">
    <location>
        <begin position="120"/>
        <end position="148"/>
    </location>
</feature>
<feature type="short sequence motif" description="VIMAG">
    <location>
        <begin position="99"/>
        <end position="103"/>
    </location>
</feature>
<feature type="compositionally biased region" description="Acidic residues" evidence="3">
    <location>
        <begin position="120"/>
        <end position="132"/>
    </location>
</feature>
<feature type="compositionally biased region" description="Polar residues" evidence="3">
    <location>
        <begin position="138"/>
        <end position="148"/>
    </location>
</feature>
<name>GDU3_ARATH</name>
<proteinExistence type="evidence at protein level"/>
<protein>
    <recommendedName>
        <fullName>Protein GLUTAMINE DUMPER 3</fullName>
    </recommendedName>
    <alternativeName>
        <fullName>Protein LESS SUSCEPTIBLE TO BSCTV 1</fullName>
        <shortName>Protein LBS1</shortName>
    </alternativeName>
</protein>
<keyword id="KW-0029">Amino-acid transport</keyword>
<keyword id="KW-0472">Membrane</keyword>
<keyword id="KW-1185">Reference proteome</keyword>
<keyword id="KW-0812">Transmembrane</keyword>
<keyword id="KW-1133">Transmembrane helix</keyword>
<keyword id="KW-0813">Transport</keyword>
<dbReference type="EMBL" id="AB018118">
    <property type="protein sequence ID" value="BAB09586.1"/>
    <property type="molecule type" value="Genomic_DNA"/>
</dbReference>
<dbReference type="EMBL" id="CP002688">
    <property type="protein sequence ID" value="AED96935.1"/>
    <property type="molecule type" value="Genomic_DNA"/>
</dbReference>
<dbReference type="EMBL" id="BT012591">
    <property type="protein sequence ID" value="AAT06410.1"/>
    <property type="molecule type" value="mRNA"/>
</dbReference>
<dbReference type="EMBL" id="BT014818">
    <property type="protein sequence ID" value="AAT41801.1"/>
    <property type="molecule type" value="mRNA"/>
</dbReference>
<dbReference type="RefSeq" id="NP_680451.2">
    <property type="nucleotide sequence ID" value="NM_148146.5"/>
</dbReference>
<dbReference type="SMR" id="Q9FHH5"/>
<dbReference type="BioGRID" id="21119">
    <property type="interactions" value="14"/>
</dbReference>
<dbReference type="FunCoup" id="Q9FHH5">
    <property type="interactions" value="172"/>
</dbReference>
<dbReference type="IntAct" id="Q9FHH5">
    <property type="interactions" value="14"/>
</dbReference>
<dbReference type="MINT" id="Q9FHH5"/>
<dbReference type="STRING" id="3702.Q9FHH5"/>
<dbReference type="GlyGen" id="Q9FHH5">
    <property type="glycosylation" value="1 site"/>
</dbReference>
<dbReference type="PaxDb" id="3702-AT5G57685.1"/>
<dbReference type="ProteomicsDB" id="247125"/>
<dbReference type="EnsemblPlants" id="AT5G57685.1">
    <property type="protein sequence ID" value="AT5G57685.1"/>
    <property type="gene ID" value="AT5G57685"/>
</dbReference>
<dbReference type="GeneID" id="835875"/>
<dbReference type="Gramene" id="AT5G57685.1">
    <property type="protein sequence ID" value="AT5G57685.1"/>
    <property type="gene ID" value="AT5G57685"/>
</dbReference>
<dbReference type="KEGG" id="ath:AT5G57685"/>
<dbReference type="Araport" id="AT5G57685"/>
<dbReference type="TAIR" id="AT5G57685">
    <property type="gene designation" value="GDU3"/>
</dbReference>
<dbReference type="eggNOG" id="ENOG502S1CH">
    <property type="taxonomic scope" value="Eukaryota"/>
</dbReference>
<dbReference type="HOGENOM" id="CLU_112624_2_2_1"/>
<dbReference type="InParanoid" id="Q9FHH5"/>
<dbReference type="OMA" id="GCSYWRL"/>
<dbReference type="OrthoDB" id="1930784at2759"/>
<dbReference type="PhylomeDB" id="Q9FHH5"/>
<dbReference type="PRO" id="PR:Q9FHH5"/>
<dbReference type="Proteomes" id="UP000006548">
    <property type="component" value="Chromosome 5"/>
</dbReference>
<dbReference type="ExpressionAtlas" id="Q9FHH5">
    <property type="expression patterns" value="baseline and differential"/>
</dbReference>
<dbReference type="GO" id="GO:0016020">
    <property type="term" value="C:membrane"/>
    <property type="evidence" value="ECO:0007669"/>
    <property type="project" value="UniProtKB-SubCell"/>
</dbReference>
<dbReference type="GO" id="GO:0006865">
    <property type="term" value="P:amino acid transport"/>
    <property type="evidence" value="ECO:0007669"/>
    <property type="project" value="UniProtKB-KW"/>
</dbReference>
<dbReference type="GO" id="GO:0080143">
    <property type="term" value="P:regulation of amino acid export"/>
    <property type="evidence" value="ECO:0000315"/>
    <property type="project" value="TAIR"/>
</dbReference>
<dbReference type="GO" id="GO:0009615">
    <property type="term" value="P:response to virus"/>
    <property type="evidence" value="ECO:0000315"/>
    <property type="project" value="TAIR"/>
</dbReference>
<dbReference type="GO" id="GO:0032940">
    <property type="term" value="P:secretion by cell"/>
    <property type="evidence" value="ECO:0000250"/>
    <property type="project" value="TAIR"/>
</dbReference>
<dbReference type="InterPro" id="IPR040359">
    <property type="entry name" value="GDU"/>
</dbReference>
<dbReference type="PANTHER" id="PTHR33228:SF36">
    <property type="entry name" value="PROTEIN GLUTAMINE DUMPER 3"/>
    <property type="match status" value="1"/>
</dbReference>
<dbReference type="PANTHER" id="PTHR33228">
    <property type="entry name" value="PROTEIN GLUTAMINE DUMPER 4-RELATED"/>
    <property type="match status" value="1"/>
</dbReference>
<comment type="function">
    <text evidence="4 5 6">Probable subunit of an amino acid transporter involved in the regulation of the amino acid metabolism. Stimulates amino acid export by activating nonselective amino acid facilitators. Acts upstream genes involved in the salicylic acid (SA) pathway and in the geminivirus-host interaction.</text>
</comment>
<comment type="interaction">
    <interactant intactId="EBI-6290786">
        <id>Q9FHH5</id>
    </interactant>
    <interactant intactId="EBI-25521735">
        <id>Q9LSZ5</id>
        <label>MQM1.2</label>
    </interactant>
    <organismsDiffer>false</organismsDiffer>
    <experiments>3</experiments>
</comment>
<comment type="subcellular location">
    <subcellularLocation>
        <location evidence="6">Membrane</location>
        <topology evidence="6">Single-pass membrane protein</topology>
    </subcellularLocation>
</comment>
<comment type="tissue specificity">
    <text evidence="4 6">Expressed in the vascular tissues. Also detected in anthers.</text>
</comment>
<comment type="induction">
    <text evidence="5">By geminivirus (BSCTV) infection.</text>
</comment>
<comment type="domain">
    <text evidence="1">The VIMAG motif is necessary for the function of the protein.</text>
</comment>
<comment type="miscellaneous">
    <text>Overexpression of GLUTAMINE DUMPER 3 leads to free amino acid levels accumulation, plant size decrease and to an enhanced resistance to geminivirus infection (PubMed:20018597, PubMed:20042021, Ref.7).</text>
</comment>
<comment type="similarity">
    <text evidence="7">Belongs to the GLUTAMINE DUMPER 1 (TC 9.B.60) family.</text>
</comment>
<organism>
    <name type="scientific">Arabidopsis thaliana</name>
    <name type="common">Mouse-ear cress</name>
    <dbReference type="NCBI Taxonomy" id="3702"/>
    <lineage>
        <taxon>Eukaryota</taxon>
        <taxon>Viridiplantae</taxon>
        <taxon>Streptophyta</taxon>
        <taxon>Embryophyta</taxon>
        <taxon>Tracheophyta</taxon>
        <taxon>Spermatophyta</taxon>
        <taxon>Magnoliopsida</taxon>
        <taxon>eudicotyledons</taxon>
        <taxon>Gunneridae</taxon>
        <taxon>Pentapetalae</taxon>
        <taxon>rosids</taxon>
        <taxon>malvids</taxon>
        <taxon>Brassicales</taxon>
        <taxon>Brassicaceae</taxon>
        <taxon>Camelineae</taxon>
        <taxon>Arabidopsis</taxon>
    </lineage>
</organism>
<sequence length="148" mass="16203">MEGRQYYPPRENVEGNRTTMGGGPHSPWHSPVPYLFGGLAAMLGLIAFALLILACSYWRLSGYLDGEENQSRERDLEVGDVKPDKTAVKPVALPEKFLVIMAGNVKPTYLATPSVKTCTCDDDDDEDDDVEGSDQVVPRSSESNGETH</sequence>
<evidence type="ECO:0000250" key="1"/>
<evidence type="ECO:0000255" key="2"/>
<evidence type="ECO:0000256" key="3">
    <source>
        <dbReference type="SAM" id="MobiDB-lite"/>
    </source>
</evidence>
<evidence type="ECO:0000269" key="4">
    <source>
    </source>
</evidence>
<evidence type="ECO:0000269" key="5">
    <source>
    </source>
</evidence>
<evidence type="ECO:0000269" key="6">
    <source ref="7"/>
</evidence>
<evidence type="ECO:0000305" key="7"/>
<gene>
    <name type="primary">GDU3</name>
    <name type="synonym">LBS1</name>
    <name type="ordered locus">At5g57685</name>
    <name type="ORF">MRI1.4</name>
</gene>